<keyword id="KW-0002">3D-structure</keyword>
<keyword id="KW-0903">Direct protein sequencing</keyword>
<keyword id="KW-0318">Glutathionylation</keyword>
<keyword id="KW-0456">Lyase</keyword>
<keyword id="KW-0460">Magnesium</keyword>
<keyword id="KW-0464">Manganese</keyword>
<keyword id="KW-0479">Metal-binding</keyword>
<keyword id="KW-1185">Reference proteome</keyword>
<keyword id="KW-0686">Riboflavin biosynthesis</keyword>
<comment type="function">
    <text evidence="4">Catalyzes the conversion of D-ribulose 5-phosphate to formate and 3,4-dihydroxy-2-butanone 4-phosphate.</text>
</comment>
<comment type="catalytic activity">
    <reaction evidence="4">
        <text>D-ribulose 5-phosphate = (2S)-2-hydroxy-3-oxobutyl phosphate + formate + H(+)</text>
        <dbReference type="Rhea" id="RHEA:18457"/>
        <dbReference type="ChEBI" id="CHEBI:15378"/>
        <dbReference type="ChEBI" id="CHEBI:15740"/>
        <dbReference type="ChEBI" id="CHEBI:58121"/>
        <dbReference type="ChEBI" id="CHEBI:58830"/>
        <dbReference type="EC" id="4.1.99.12"/>
    </reaction>
    <physiologicalReaction direction="left-to-right" evidence="8">
        <dbReference type="Rhea" id="RHEA:18458"/>
    </physiologicalReaction>
</comment>
<comment type="cofactor">
    <cofactor evidence="4 5">
        <name>Mg(2+)</name>
        <dbReference type="ChEBI" id="CHEBI:18420"/>
    </cofactor>
    <cofactor evidence="9">
        <name>Mn(2+)</name>
        <dbReference type="ChEBI" id="CHEBI:29035"/>
    </cofactor>
    <text evidence="5">Binds 2 divalent metal cations per subunit. Magnesium or manganese.</text>
</comment>
<comment type="pathway">
    <text evidence="8">Cofactor biosynthesis; riboflavin biosynthesis; 2-hydroxy-3-oxobutyl phosphate from D-ribulose 5-phosphate: step 1/1.</text>
</comment>
<comment type="subunit">
    <text evidence="5">Homodimer.</text>
</comment>
<comment type="PTM">
    <text evidence="3">S-glutathionylation is reversible and dependent on a glutaredoxin.</text>
</comment>
<comment type="mass spectrometry"/>
<comment type="similarity">
    <text evidence="7">Belongs to the DHBP synthase family.</text>
</comment>
<name>RIB3_PYRO7</name>
<evidence type="ECO:0000250" key="1"/>
<evidence type="ECO:0000250" key="2">
    <source>
        <dbReference type="UniProtKB" id="Q5A3V6"/>
    </source>
</evidence>
<evidence type="ECO:0000250" key="3">
    <source>
        <dbReference type="UniProtKB" id="Q99258"/>
    </source>
</evidence>
<evidence type="ECO:0000269" key="4">
    <source>
    </source>
</evidence>
<evidence type="ECO:0000269" key="5">
    <source>
    </source>
</evidence>
<evidence type="ECO:0000303" key="6">
    <source>
    </source>
</evidence>
<evidence type="ECO:0000305" key="7"/>
<evidence type="ECO:0000305" key="8">
    <source>
    </source>
</evidence>
<evidence type="ECO:0000305" key="9">
    <source>
    </source>
</evidence>
<evidence type="ECO:0007744" key="10">
    <source>
        <dbReference type="PDB" id="1K49"/>
    </source>
</evidence>
<evidence type="ECO:0007744" key="11">
    <source>
        <dbReference type="PDB" id="1K4I"/>
    </source>
</evidence>
<evidence type="ECO:0007744" key="12">
    <source>
        <dbReference type="PDB" id="1K4L"/>
    </source>
</evidence>
<evidence type="ECO:0007744" key="13">
    <source>
        <dbReference type="PDB" id="1K4O"/>
    </source>
</evidence>
<evidence type="ECO:0007744" key="14">
    <source>
        <dbReference type="PDB" id="1K4P"/>
    </source>
</evidence>
<evidence type="ECO:0007829" key="15">
    <source>
        <dbReference type="PDB" id="1K4I"/>
    </source>
</evidence>
<evidence type="ECO:0007829" key="16">
    <source>
        <dbReference type="PDB" id="1K4P"/>
    </source>
</evidence>
<proteinExistence type="evidence at protein level"/>
<accession>Q8TG90</accession>
<accession>G4NCK9</accession>
<sequence>MPSTDSIPKSNFDAIPDVIQAFKNGEFVVVLDDPSRENEADLIIAAESVTTEQMAFMVRHSSGLICAPLTPERTTALDLPQMVTHNADPRGTAYTVSVDAEHPSTTTGISAHDRALACRMLAAPDAQPSHFRRPGHVFPLRAVAGGVRARRGHTEAGVELCRLAGKRPVAVISEIVDDGQEVEGRAVRAAPGMLRGDECVAFARRWGLKVCTIEDMIAHVEKTEGKLETNGSG</sequence>
<organism>
    <name type="scientific">Pyricularia oryzae (strain 70-15 / ATCC MYA-4617 / FGSC 8958)</name>
    <name type="common">Rice blast fungus</name>
    <name type="synonym">Magnaporthe oryzae</name>
    <dbReference type="NCBI Taxonomy" id="242507"/>
    <lineage>
        <taxon>Eukaryota</taxon>
        <taxon>Fungi</taxon>
        <taxon>Dikarya</taxon>
        <taxon>Ascomycota</taxon>
        <taxon>Pezizomycotina</taxon>
        <taxon>Sordariomycetes</taxon>
        <taxon>Sordariomycetidae</taxon>
        <taxon>Magnaporthales</taxon>
        <taxon>Pyriculariaceae</taxon>
        <taxon>Pyricularia</taxon>
    </lineage>
</organism>
<gene>
    <name type="primary">RIB3</name>
    <name type="ORF">MGG_01049</name>
</gene>
<protein>
    <recommendedName>
        <fullName>3,4-dihydroxy-2-butanone 4-phosphate synthase</fullName>
        <shortName>DHBP synthase</shortName>
        <shortName evidence="6">DS</shortName>
        <ecNumber evidence="4">4.1.99.12</ecNumber>
    </recommendedName>
</protein>
<dbReference type="EC" id="4.1.99.12" evidence="4"/>
<dbReference type="EMBL" id="AF430214">
    <property type="protein sequence ID" value="AAL84175.1"/>
    <property type="molecule type" value="mRNA"/>
</dbReference>
<dbReference type="EMBL" id="CM001235">
    <property type="protein sequence ID" value="EHA48306.1"/>
    <property type="molecule type" value="Genomic_DNA"/>
</dbReference>
<dbReference type="RefSeq" id="XP_003717890.1">
    <property type="nucleotide sequence ID" value="XM_003717842.1"/>
</dbReference>
<dbReference type="PDB" id="1K49">
    <property type="method" value="X-ray"/>
    <property type="resolution" value="1.50 A"/>
    <property type="chains" value="A=1-233"/>
</dbReference>
<dbReference type="PDB" id="1K4I">
    <property type="method" value="X-ray"/>
    <property type="resolution" value="0.98 A"/>
    <property type="chains" value="A=1-233"/>
</dbReference>
<dbReference type="PDB" id="1K4L">
    <property type="method" value="X-ray"/>
    <property type="resolution" value="1.60 A"/>
    <property type="chains" value="A=1-233"/>
</dbReference>
<dbReference type="PDB" id="1K4O">
    <property type="method" value="X-ray"/>
    <property type="resolution" value="1.10 A"/>
    <property type="chains" value="A=1-233"/>
</dbReference>
<dbReference type="PDB" id="1K4P">
    <property type="method" value="X-ray"/>
    <property type="resolution" value="1.00 A"/>
    <property type="chains" value="A=1-233"/>
</dbReference>
<dbReference type="PDBsum" id="1K49"/>
<dbReference type="PDBsum" id="1K4I"/>
<dbReference type="PDBsum" id="1K4L"/>
<dbReference type="PDBsum" id="1K4O"/>
<dbReference type="PDBsum" id="1K4P"/>
<dbReference type="SMR" id="Q8TG90"/>
<dbReference type="FunCoup" id="Q8TG90">
    <property type="interactions" value="123"/>
</dbReference>
<dbReference type="STRING" id="242507.Q8TG90"/>
<dbReference type="EnsemblFungi" id="MGG_01049T0">
    <property type="protein sequence ID" value="MGG_01049T0"/>
    <property type="gene ID" value="MGG_01049"/>
</dbReference>
<dbReference type="GeneID" id="2674307"/>
<dbReference type="KEGG" id="mgr:MGG_01049"/>
<dbReference type="VEuPathDB" id="FungiDB:MGG_01049"/>
<dbReference type="eggNOG" id="KOG1284">
    <property type="taxonomic scope" value="Eukaryota"/>
</dbReference>
<dbReference type="HOGENOM" id="CLU_020273_3_1_1"/>
<dbReference type="InParanoid" id="Q8TG90"/>
<dbReference type="OMA" id="DAGGLIC"/>
<dbReference type="OrthoDB" id="60371at2759"/>
<dbReference type="UniPathway" id="UPA00275">
    <property type="reaction ID" value="UER00399"/>
</dbReference>
<dbReference type="EvolutionaryTrace" id="Q8TG90"/>
<dbReference type="Proteomes" id="UP000009058">
    <property type="component" value="Chromosome 5"/>
</dbReference>
<dbReference type="GO" id="GO:0005829">
    <property type="term" value="C:cytosol"/>
    <property type="evidence" value="ECO:0007669"/>
    <property type="project" value="TreeGrafter"/>
</dbReference>
<dbReference type="GO" id="GO:0005758">
    <property type="term" value="C:mitochondrial intermembrane space"/>
    <property type="evidence" value="ECO:0007669"/>
    <property type="project" value="TreeGrafter"/>
</dbReference>
<dbReference type="GO" id="GO:0008686">
    <property type="term" value="F:3,4-dihydroxy-2-butanone-4-phosphate synthase activity"/>
    <property type="evidence" value="ECO:0007669"/>
    <property type="project" value="UniProtKB-EC"/>
</dbReference>
<dbReference type="GO" id="GO:0046872">
    <property type="term" value="F:metal ion binding"/>
    <property type="evidence" value="ECO:0007669"/>
    <property type="project" value="UniProtKB-KW"/>
</dbReference>
<dbReference type="GO" id="GO:0009231">
    <property type="term" value="P:riboflavin biosynthetic process"/>
    <property type="evidence" value="ECO:0007669"/>
    <property type="project" value="UniProtKB-UniPathway"/>
</dbReference>
<dbReference type="FunFam" id="3.90.870.10:FF:000002">
    <property type="entry name" value="3,4-dihydroxy-2-butanone 4-phosphate synthase"/>
    <property type="match status" value="1"/>
</dbReference>
<dbReference type="Gene3D" id="3.90.870.10">
    <property type="entry name" value="DHBP synthase"/>
    <property type="match status" value="1"/>
</dbReference>
<dbReference type="InterPro" id="IPR017945">
    <property type="entry name" value="DHBP_synth_RibB-like_a/b_dom"/>
</dbReference>
<dbReference type="InterPro" id="IPR000422">
    <property type="entry name" value="DHBP_synthase_RibB"/>
</dbReference>
<dbReference type="NCBIfam" id="TIGR00506">
    <property type="entry name" value="ribB"/>
    <property type="match status" value="1"/>
</dbReference>
<dbReference type="PANTHER" id="PTHR21327:SF18">
    <property type="entry name" value="3,4-DIHYDROXY-2-BUTANONE 4-PHOSPHATE SYNTHASE"/>
    <property type="match status" value="1"/>
</dbReference>
<dbReference type="PANTHER" id="PTHR21327">
    <property type="entry name" value="GTP CYCLOHYDROLASE II-RELATED"/>
    <property type="match status" value="1"/>
</dbReference>
<dbReference type="Pfam" id="PF00926">
    <property type="entry name" value="DHBP_synthase"/>
    <property type="match status" value="1"/>
</dbReference>
<dbReference type="SUPFAM" id="SSF55821">
    <property type="entry name" value="YrdC/RibB"/>
    <property type="match status" value="1"/>
</dbReference>
<reference key="1">
    <citation type="journal article" date="2000" name="Acta Crystallogr. D">
        <title>Cloning, expression, purification and crystallization of dihydroxybutanone phosphate synthase from Magnaporthe grisea.</title>
        <authorList>
            <person name="Liao D.-I."/>
            <person name="Viitanen P.V."/>
            <person name="Jordan D.B."/>
        </authorList>
    </citation>
    <scope>NUCLEOTIDE SEQUENCE [MRNA]</scope>
    <scope>PROTEIN SEQUENCE OF 2-17</scope>
    <scope>FUNCTION</scope>
    <scope>CATALYTIC ACTIVITY</scope>
    <scope>COFACTOR</scope>
    <scope>MASS SPECTROMETRY</scope>
    <scope>PATHWAY</scope>
</reference>
<reference key="2">
    <citation type="journal article" date="2005" name="Nature">
        <title>The genome sequence of the rice blast fungus Magnaporthe grisea.</title>
        <authorList>
            <person name="Dean R.A."/>
            <person name="Talbot N.J."/>
            <person name="Ebbole D.J."/>
            <person name="Farman M.L."/>
            <person name="Mitchell T.K."/>
            <person name="Orbach M.J."/>
            <person name="Thon M.R."/>
            <person name="Kulkarni R."/>
            <person name="Xu J.-R."/>
            <person name="Pan H."/>
            <person name="Read N.D."/>
            <person name="Lee Y.-H."/>
            <person name="Carbone I."/>
            <person name="Brown D."/>
            <person name="Oh Y.Y."/>
            <person name="Donofrio N."/>
            <person name="Jeong J.S."/>
            <person name="Soanes D.M."/>
            <person name="Djonovic S."/>
            <person name="Kolomiets E."/>
            <person name="Rehmeyer C."/>
            <person name="Li W."/>
            <person name="Harding M."/>
            <person name="Kim S."/>
            <person name="Lebrun M.-H."/>
            <person name="Bohnert H."/>
            <person name="Coughlan S."/>
            <person name="Butler J."/>
            <person name="Calvo S.E."/>
            <person name="Ma L.-J."/>
            <person name="Nicol R."/>
            <person name="Purcell S."/>
            <person name="Nusbaum C."/>
            <person name="Galagan J.E."/>
            <person name="Birren B.W."/>
        </authorList>
    </citation>
    <scope>NUCLEOTIDE SEQUENCE [LARGE SCALE GENOMIC DNA]</scope>
    <source>
        <strain>70-15 / ATCC MYA-4617 / FGSC 8958</strain>
    </source>
</reference>
<reference evidence="10 11 12 13 14" key="3">
    <citation type="journal article" date="2002" name="Biochemistry">
        <title>Structural definition of the active site and catalytic mechanism of 3,4-dihydroxy-2-butanone-4-phosphate synthase.</title>
        <authorList>
            <person name="Liao D.-I."/>
            <person name="Zheng Y.-J."/>
            <person name="Viitanen P.V."/>
            <person name="Jordan D.B."/>
        </authorList>
    </citation>
    <scope>X-RAY CRYSTALLOGRAPHY (0.98 ANGSTROMS) IN COMPLEXES WITH MAGNESIUM; MANGANESE AND ZINC</scope>
    <scope>COFACTOR</scope>
    <scope>SUBUNIT</scope>
</reference>
<feature type="initiator methionine" description="Removed" evidence="4">
    <location>
        <position position="1"/>
    </location>
</feature>
<feature type="chain" id="PRO_0000296686" description="3,4-dihydroxy-2-butanone 4-phosphate synthase">
    <location>
        <begin position="2"/>
        <end position="233"/>
    </location>
</feature>
<feature type="binding site" evidence="5 11">
    <location>
        <position position="37"/>
    </location>
    <ligand>
        <name>Mg(2+)</name>
        <dbReference type="ChEBI" id="CHEBI:18420"/>
        <label>1</label>
    </ligand>
</feature>
<feature type="binding site" evidence="5 11">
    <location>
        <position position="37"/>
    </location>
    <ligand>
        <name>Mg(2+)</name>
        <dbReference type="ChEBI" id="CHEBI:18420"/>
        <label>2</label>
    </ligand>
</feature>
<feature type="binding site" evidence="5 12">
    <location>
        <position position="37"/>
    </location>
    <ligand>
        <name>Mn(2+)</name>
        <dbReference type="ChEBI" id="CHEBI:29035"/>
        <label>1</label>
    </ligand>
</feature>
<feature type="binding site" evidence="5 12">
    <location>
        <position position="37"/>
    </location>
    <ligand>
        <name>Mn(2+)</name>
        <dbReference type="ChEBI" id="CHEBI:29035"/>
        <label>2</label>
    </ligand>
</feature>
<feature type="binding site" evidence="2">
    <location>
        <position position="41"/>
    </location>
    <ligand>
        <name>D-ribulose 5-phosphate</name>
        <dbReference type="ChEBI" id="CHEBI:58121"/>
    </ligand>
</feature>
<feature type="binding site" evidence="2">
    <location>
        <position position="92"/>
    </location>
    <ligand>
        <name>D-ribulose 5-phosphate</name>
        <dbReference type="ChEBI" id="CHEBI:58121"/>
    </ligand>
</feature>
<feature type="binding site" evidence="2">
    <location>
        <begin position="150"/>
        <end position="154"/>
    </location>
    <ligand>
        <name>D-ribulose 5-phosphate</name>
        <dbReference type="ChEBI" id="CHEBI:58121"/>
    </ligand>
</feature>
<feature type="binding site" evidence="5 11">
    <location>
        <position position="153"/>
    </location>
    <ligand>
        <name>Mg(2+)</name>
        <dbReference type="ChEBI" id="CHEBI:18420"/>
        <label>2</label>
    </ligand>
</feature>
<feature type="binding site" evidence="5 12">
    <location>
        <position position="153"/>
    </location>
    <ligand>
        <name>Mn(2+)</name>
        <dbReference type="ChEBI" id="CHEBI:29035"/>
        <label>2</label>
    </ligand>
</feature>
<feature type="site" description="Essential for catalytic activity" evidence="1">
    <location>
        <position position="136"/>
    </location>
</feature>
<feature type="site" description="Essential for catalytic activity" evidence="1">
    <location>
        <position position="174"/>
    </location>
</feature>
<feature type="modified residue" description="S-glutathionyl cysteine" evidence="3">
    <location>
        <position position="66"/>
    </location>
</feature>
<feature type="helix" evidence="15">
    <location>
        <begin position="15"/>
        <end position="23"/>
    </location>
</feature>
<feature type="strand" evidence="15">
    <location>
        <begin position="28"/>
        <end position="31"/>
    </location>
</feature>
<feature type="turn" evidence="15">
    <location>
        <begin position="34"/>
        <end position="37"/>
    </location>
</feature>
<feature type="strand" evidence="15">
    <location>
        <begin position="40"/>
        <end position="45"/>
    </location>
</feature>
<feature type="helix" evidence="15">
    <location>
        <begin position="46"/>
        <end position="48"/>
    </location>
</feature>
<feature type="helix" evidence="15">
    <location>
        <begin position="51"/>
        <end position="60"/>
    </location>
</feature>
<feature type="strand" evidence="15">
    <location>
        <begin position="66"/>
        <end position="69"/>
    </location>
</feature>
<feature type="helix" evidence="15">
    <location>
        <begin position="71"/>
        <end position="76"/>
    </location>
</feature>
<feature type="strand" evidence="15">
    <location>
        <begin position="98"/>
        <end position="100"/>
    </location>
</feature>
<feature type="strand" evidence="15">
    <location>
        <begin position="106"/>
        <end position="108"/>
    </location>
</feature>
<feature type="helix" evidence="15">
    <location>
        <begin position="111"/>
        <end position="122"/>
    </location>
</feature>
<feature type="helix" evidence="15">
    <location>
        <begin position="128"/>
        <end position="130"/>
    </location>
</feature>
<feature type="strand" evidence="15">
    <location>
        <begin position="131"/>
        <end position="141"/>
    </location>
</feature>
<feature type="helix" evidence="15">
    <location>
        <begin position="146"/>
        <end position="149"/>
    </location>
</feature>
<feature type="helix" evidence="15">
    <location>
        <begin position="153"/>
        <end position="163"/>
    </location>
</feature>
<feature type="strand" evidence="15">
    <location>
        <begin position="168"/>
        <end position="177"/>
    </location>
</feature>
<feature type="strand" evidence="16">
    <location>
        <begin position="180"/>
        <end position="182"/>
    </location>
</feature>
<feature type="strand" evidence="15">
    <location>
        <begin position="188"/>
        <end position="190"/>
    </location>
</feature>
<feature type="helix" evidence="15">
    <location>
        <begin position="196"/>
        <end position="205"/>
    </location>
</feature>
<feature type="strand" evidence="15">
    <location>
        <begin position="209"/>
        <end position="212"/>
    </location>
</feature>
<feature type="helix" evidence="15">
    <location>
        <begin position="213"/>
        <end position="224"/>
    </location>
</feature>